<name>TF2H3_HUMAN</name>
<reference key="1">
    <citation type="journal article" date="2004" name="Nat. Genet.">
        <title>Complete sequencing and characterization of 21,243 full-length human cDNAs.</title>
        <authorList>
            <person name="Ota T."/>
            <person name="Suzuki Y."/>
            <person name="Nishikawa T."/>
            <person name="Otsuki T."/>
            <person name="Sugiyama T."/>
            <person name="Irie R."/>
            <person name="Wakamatsu A."/>
            <person name="Hayashi K."/>
            <person name="Sato H."/>
            <person name="Nagai K."/>
            <person name="Kimura K."/>
            <person name="Makita H."/>
            <person name="Sekine M."/>
            <person name="Obayashi M."/>
            <person name="Nishi T."/>
            <person name="Shibahara T."/>
            <person name="Tanaka T."/>
            <person name="Ishii S."/>
            <person name="Yamamoto J."/>
            <person name="Saito K."/>
            <person name="Kawai Y."/>
            <person name="Isono Y."/>
            <person name="Nakamura Y."/>
            <person name="Nagahari K."/>
            <person name="Murakami K."/>
            <person name="Yasuda T."/>
            <person name="Iwayanagi T."/>
            <person name="Wagatsuma M."/>
            <person name="Shiratori A."/>
            <person name="Sudo H."/>
            <person name="Hosoiri T."/>
            <person name="Kaku Y."/>
            <person name="Kodaira H."/>
            <person name="Kondo H."/>
            <person name="Sugawara M."/>
            <person name="Takahashi M."/>
            <person name="Kanda K."/>
            <person name="Yokoi T."/>
            <person name="Furuya T."/>
            <person name="Kikkawa E."/>
            <person name="Omura Y."/>
            <person name="Abe K."/>
            <person name="Kamihara K."/>
            <person name="Katsuta N."/>
            <person name="Sato K."/>
            <person name="Tanikawa M."/>
            <person name="Yamazaki M."/>
            <person name="Ninomiya K."/>
            <person name="Ishibashi T."/>
            <person name="Yamashita H."/>
            <person name="Murakawa K."/>
            <person name="Fujimori K."/>
            <person name="Tanai H."/>
            <person name="Kimata M."/>
            <person name="Watanabe M."/>
            <person name="Hiraoka S."/>
            <person name="Chiba Y."/>
            <person name="Ishida S."/>
            <person name="Ono Y."/>
            <person name="Takiguchi S."/>
            <person name="Watanabe S."/>
            <person name="Yosida M."/>
            <person name="Hotuta T."/>
            <person name="Kusano J."/>
            <person name="Kanehori K."/>
            <person name="Takahashi-Fujii A."/>
            <person name="Hara H."/>
            <person name="Tanase T.-O."/>
            <person name="Nomura Y."/>
            <person name="Togiya S."/>
            <person name="Komai F."/>
            <person name="Hara R."/>
            <person name="Takeuchi K."/>
            <person name="Arita M."/>
            <person name="Imose N."/>
            <person name="Musashino K."/>
            <person name="Yuuki H."/>
            <person name="Oshima A."/>
            <person name="Sasaki N."/>
            <person name="Aotsuka S."/>
            <person name="Yoshikawa Y."/>
            <person name="Matsunawa H."/>
            <person name="Ichihara T."/>
            <person name="Shiohata N."/>
            <person name="Sano S."/>
            <person name="Moriya S."/>
            <person name="Momiyama H."/>
            <person name="Satoh N."/>
            <person name="Takami S."/>
            <person name="Terashima Y."/>
            <person name="Suzuki O."/>
            <person name="Nakagawa S."/>
            <person name="Senoh A."/>
            <person name="Mizoguchi H."/>
            <person name="Goto Y."/>
            <person name="Shimizu F."/>
            <person name="Wakebe H."/>
            <person name="Hishigaki H."/>
            <person name="Watanabe T."/>
            <person name="Sugiyama A."/>
            <person name="Takemoto M."/>
            <person name="Kawakami B."/>
            <person name="Yamazaki M."/>
            <person name="Watanabe K."/>
            <person name="Kumagai A."/>
            <person name="Itakura S."/>
            <person name="Fukuzumi Y."/>
            <person name="Fujimori Y."/>
            <person name="Komiyama M."/>
            <person name="Tashiro H."/>
            <person name="Tanigami A."/>
            <person name="Fujiwara T."/>
            <person name="Ono T."/>
            <person name="Yamada K."/>
            <person name="Fujii Y."/>
            <person name="Ozaki K."/>
            <person name="Hirao M."/>
            <person name="Ohmori Y."/>
            <person name="Kawabata A."/>
            <person name="Hikiji T."/>
            <person name="Kobatake N."/>
            <person name="Inagaki H."/>
            <person name="Ikema Y."/>
            <person name="Okamoto S."/>
            <person name="Okitani R."/>
            <person name="Kawakami T."/>
            <person name="Noguchi S."/>
            <person name="Itoh T."/>
            <person name="Shigeta K."/>
            <person name="Senba T."/>
            <person name="Matsumura K."/>
            <person name="Nakajima Y."/>
            <person name="Mizuno T."/>
            <person name="Morinaga M."/>
            <person name="Sasaki M."/>
            <person name="Togashi T."/>
            <person name="Oyama M."/>
            <person name="Hata H."/>
            <person name="Watanabe M."/>
            <person name="Komatsu T."/>
            <person name="Mizushima-Sugano J."/>
            <person name="Satoh T."/>
            <person name="Shirai Y."/>
            <person name="Takahashi Y."/>
            <person name="Nakagawa K."/>
            <person name="Okumura K."/>
            <person name="Nagase T."/>
            <person name="Nomura N."/>
            <person name="Kikuchi H."/>
            <person name="Masuho Y."/>
            <person name="Yamashita R."/>
            <person name="Nakai K."/>
            <person name="Yada T."/>
            <person name="Nakamura Y."/>
            <person name="Ohara O."/>
            <person name="Isogai T."/>
            <person name="Sugano S."/>
        </authorList>
    </citation>
    <scope>NUCLEOTIDE SEQUENCE [LARGE SCALE MRNA] (ISOFORMS 1 AND 2)</scope>
</reference>
<reference key="2">
    <citation type="submission" date="2002-09" db="EMBL/GenBank/DDBJ databases">
        <authorList>
            <consortium name="NIEHS SNPs program"/>
        </authorList>
    </citation>
    <scope>NUCLEOTIDE SEQUENCE [GENOMIC DNA]</scope>
    <scope>ALTERNATIVE SPLICING (ISOFORM 1)</scope>
</reference>
<reference key="3">
    <citation type="journal article" date="2006" name="Nature">
        <title>The finished DNA sequence of human chromosome 12.</title>
        <authorList>
            <person name="Scherer S.E."/>
            <person name="Muzny D.M."/>
            <person name="Buhay C.J."/>
            <person name="Chen R."/>
            <person name="Cree A."/>
            <person name="Ding Y."/>
            <person name="Dugan-Rocha S."/>
            <person name="Gill R."/>
            <person name="Gunaratne P."/>
            <person name="Harris R.A."/>
            <person name="Hawes A.C."/>
            <person name="Hernandez J."/>
            <person name="Hodgson A.V."/>
            <person name="Hume J."/>
            <person name="Jackson A."/>
            <person name="Khan Z.M."/>
            <person name="Kovar-Smith C."/>
            <person name="Lewis L.R."/>
            <person name="Lozado R.J."/>
            <person name="Metzker M.L."/>
            <person name="Milosavljevic A."/>
            <person name="Miner G.R."/>
            <person name="Montgomery K.T."/>
            <person name="Morgan M.B."/>
            <person name="Nazareth L.V."/>
            <person name="Scott G."/>
            <person name="Sodergren E."/>
            <person name="Song X.-Z."/>
            <person name="Steffen D."/>
            <person name="Lovering R.C."/>
            <person name="Wheeler D.A."/>
            <person name="Worley K.C."/>
            <person name="Yuan Y."/>
            <person name="Zhang Z."/>
            <person name="Adams C.Q."/>
            <person name="Ansari-Lari M.A."/>
            <person name="Ayele M."/>
            <person name="Brown M.J."/>
            <person name="Chen G."/>
            <person name="Chen Z."/>
            <person name="Clerc-Blankenburg K.P."/>
            <person name="Davis C."/>
            <person name="Delgado O."/>
            <person name="Dinh H.H."/>
            <person name="Draper H."/>
            <person name="Gonzalez-Garay M.L."/>
            <person name="Havlak P."/>
            <person name="Jackson L.R."/>
            <person name="Jacob L.S."/>
            <person name="Kelly S.H."/>
            <person name="Li L."/>
            <person name="Li Z."/>
            <person name="Liu J."/>
            <person name="Liu W."/>
            <person name="Lu J."/>
            <person name="Maheshwari M."/>
            <person name="Nguyen B.-V."/>
            <person name="Okwuonu G.O."/>
            <person name="Pasternak S."/>
            <person name="Perez L.M."/>
            <person name="Plopper F.J.H."/>
            <person name="Santibanez J."/>
            <person name="Shen H."/>
            <person name="Tabor P.E."/>
            <person name="Verduzco D."/>
            <person name="Waldron L."/>
            <person name="Wang Q."/>
            <person name="Williams G.A."/>
            <person name="Zhang J."/>
            <person name="Zhou J."/>
            <person name="Allen C.C."/>
            <person name="Amin A.G."/>
            <person name="Anyalebechi V."/>
            <person name="Bailey M."/>
            <person name="Barbaria J.A."/>
            <person name="Bimage K.E."/>
            <person name="Bryant N.P."/>
            <person name="Burch P.E."/>
            <person name="Burkett C.E."/>
            <person name="Burrell K.L."/>
            <person name="Calderon E."/>
            <person name="Cardenas V."/>
            <person name="Carter K."/>
            <person name="Casias K."/>
            <person name="Cavazos I."/>
            <person name="Cavazos S.R."/>
            <person name="Ceasar H."/>
            <person name="Chacko J."/>
            <person name="Chan S.N."/>
            <person name="Chavez D."/>
            <person name="Christopoulos C."/>
            <person name="Chu J."/>
            <person name="Cockrell R."/>
            <person name="Cox C.D."/>
            <person name="Dang M."/>
            <person name="Dathorne S.R."/>
            <person name="David R."/>
            <person name="Davis C.M."/>
            <person name="Davy-Carroll L."/>
            <person name="Deshazo D.R."/>
            <person name="Donlin J.E."/>
            <person name="D'Souza L."/>
            <person name="Eaves K.A."/>
            <person name="Egan A."/>
            <person name="Emery-Cohen A.J."/>
            <person name="Escotto M."/>
            <person name="Flagg N."/>
            <person name="Forbes L.D."/>
            <person name="Gabisi A.M."/>
            <person name="Garza M."/>
            <person name="Hamilton C."/>
            <person name="Henderson N."/>
            <person name="Hernandez O."/>
            <person name="Hines S."/>
            <person name="Hogues M.E."/>
            <person name="Huang M."/>
            <person name="Idlebird D.G."/>
            <person name="Johnson R."/>
            <person name="Jolivet A."/>
            <person name="Jones S."/>
            <person name="Kagan R."/>
            <person name="King L.M."/>
            <person name="Leal B."/>
            <person name="Lebow H."/>
            <person name="Lee S."/>
            <person name="LeVan J.M."/>
            <person name="Lewis L.C."/>
            <person name="London P."/>
            <person name="Lorensuhewa L.M."/>
            <person name="Loulseged H."/>
            <person name="Lovett D.A."/>
            <person name="Lucier A."/>
            <person name="Lucier R.L."/>
            <person name="Ma J."/>
            <person name="Madu R.C."/>
            <person name="Mapua P."/>
            <person name="Martindale A.D."/>
            <person name="Martinez E."/>
            <person name="Massey E."/>
            <person name="Mawhiney S."/>
            <person name="Meador M.G."/>
            <person name="Mendez S."/>
            <person name="Mercado C."/>
            <person name="Mercado I.C."/>
            <person name="Merritt C.E."/>
            <person name="Miner Z.L."/>
            <person name="Minja E."/>
            <person name="Mitchell T."/>
            <person name="Mohabbat F."/>
            <person name="Mohabbat K."/>
            <person name="Montgomery B."/>
            <person name="Moore N."/>
            <person name="Morris S."/>
            <person name="Munidasa M."/>
            <person name="Ngo R.N."/>
            <person name="Nguyen N.B."/>
            <person name="Nickerson E."/>
            <person name="Nwaokelemeh O.O."/>
            <person name="Nwokenkwo S."/>
            <person name="Obregon M."/>
            <person name="Oguh M."/>
            <person name="Oragunye N."/>
            <person name="Oviedo R.J."/>
            <person name="Parish B.J."/>
            <person name="Parker D.N."/>
            <person name="Parrish J."/>
            <person name="Parks K.L."/>
            <person name="Paul H.A."/>
            <person name="Payton B.A."/>
            <person name="Perez A."/>
            <person name="Perrin W."/>
            <person name="Pickens A."/>
            <person name="Primus E.L."/>
            <person name="Pu L.-L."/>
            <person name="Puazo M."/>
            <person name="Quiles M.M."/>
            <person name="Quiroz J.B."/>
            <person name="Rabata D."/>
            <person name="Reeves K."/>
            <person name="Ruiz S.J."/>
            <person name="Shao H."/>
            <person name="Sisson I."/>
            <person name="Sonaike T."/>
            <person name="Sorelle R.P."/>
            <person name="Sutton A.E."/>
            <person name="Svatek A.F."/>
            <person name="Svetz L.A."/>
            <person name="Tamerisa K.S."/>
            <person name="Taylor T.R."/>
            <person name="Teague B."/>
            <person name="Thomas N."/>
            <person name="Thorn R.D."/>
            <person name="Trejos Z.Y."/>
            <person name="Trevino B.K."/>
            <person name="Ukegbu O.N."/>
            <person name="Urban J.B."/>
            <person name="Vasquez L.I."/>
            <person name="Vera V.A."/>
            <person name="Villasana D.M."/>
            <person name="Wang L."/>
            <person name="Ward-Moore S."/>
            <person name="Warren J.T."/>
            <person name="Wei X."/>
            <person name="White F."/>
            <person name="Williamson A.L."/>
            <person name="Wleczyk R."/>
            <person name="Wooden H.S."/>
            <person name="Wooden S.H."/>
            <person name="Yen J."/>
            <person name="Yoon L."/>
            <person name="Yoon V."/>
            <person name="Zorrilla S.E."/>
            <person name="Nelson D."/>
            <person name="Kucherlapati R."/>
            <person name="Weinstock G."/>
            <person name="Gibbs R.A."/>
        </authorList>
    </citation>
    <scope>NUCLEOTIDE SEQUENCE [LARGE SCALE GENOMIC DNA]</scope>
</reference>
<reference key="4">
    <citation type="submission" date="2005-07" db="EMBL/GenBank/DDBJ databases">
        <authorList>
            <person name="Mural R.J."/>
            <person name="Istrail S."/>
            <person name="Sutton G.G."/>
            <person name="Florea L."/>
            <person name="Halpern A.L."/>
            <person name="Mobarry C.M."/>
            <person name="Lippert R."/>
            <person name="Walenz B."/>
            <person name="Shatkay H."/>
            <person name="Dew I."/>
            <person name="Miller J.R."/>
            <person name="Flanigan M.J."/>
            <person name="Edwards N.J."/>
            <person name="Bolanos R."/>
            <person name="Fasulo D."/>
            <person name="Halldorsson B.V."/>
            <person name="Hannenhalli S."/>
            <person name="Turner R."/>
            <person name="Yooseph S."/>
            <person name="Lu F."/>
            <person name="Nusskern D.R."/>
            <person name="Shue B.C."/>
            <person name="Zheng X.H."/>
            <person name="Zhong F."/>
            <person name="Delcher A.L."/>
            <person name="Huson D.H."/>
            <person name="Kravitz S.A."/>
            <person name="Mouchard L."/>
            <person name="Reinert K."/>
            <person name="Remington K.A."/>
            <person name="Clark A.G."/>
            <person name="Waterman M.S."/>
            <person name="Eichler E.E."/>
            <person name="Adams M.D."/>
            <person name="Hunkapiller M.W."/>
            <person name="Myers E.W."/>
            <person name="Venter J.C."/>
        </authorList>
    </citation>
    <scope>NUCLEOTIDE SEQUENCE [LARGE SCALE GENOMIC DNA]</scope>
</reference>
<reference key="5">
    <citation type="journal article" date="2004" name="Genome Res.">
        <title>The status, quality, and expansion of the NIH full-length cDNA project: the Mammalian Gene Collection (MGC).</title>
        <authorList>
            <consortium name="The MGC Project Team"/>
        </authorList>
    </citation>
    <scope>NUCLEOTIDE SEQUENCE [LARGE SCALE MRNA] (ISOFORM 1)</scope>
    <source>
        <tissue>Brain</tissue>
        <tissue>Eye</tissue>
        <tissue>Testis</tissue>
    </source>
</reference>
<reference key="6">
    <citation type="journal article" date="1994" name="EMBO J.">
        <title>p44 and p34 subunits of the BTF2/TFIIH transcription factor have homologies with SSL1, a yeast protein involved in DNA repair.</title>
        <authorList>
            <person name="Humbert S."/>
            <person name="van Vuuren H.A."/>
            <person name="Lutz Y."/>
            <person name="Hoeijmakers J.H.J."/>
            <person name="Egly J.-M."/>
            <person name="Moncollin V."/>
        </authorList>
    </citation>
    <scope>NUCLEOTIDE SEQUENCE [MRNA] OF 1-305 (ISOFORM 1)</scope>
    <scope>PROTEIN SEQUENCE OF 57-68; 78-97; 107-112; 127-132 AND 239-251 (ISOFORMS 1/2)</scope>
</reference>
<reference key="7">
    <citation type="journal article" date="1998" name="J. Biol. Chem.">
        <title>Immunoaffinity purification and functional characterization of human transcription factor IIH and RNA polymerase II from clonal cell lines that conditionally express epitope-tagged subunits of the multiprotein complexes.</title>
        <authorList>
            <person name="Kershnar E."/>
            <person name="Wu S.-Y."/>
            <person name="Chiang C.-M."/>
        </authorList>
    </citation>
    <scope>IDENTIFICATION IN THE TFIIH BASAL TRANSCRIPTION FACTOR</scope>
    <scope>SUBUNIT</scope>
    <scope>SUBCELLULAR LOCATION</scope>
</reference>
<reference key="8">
    <citation type="journal article" date="1999" name="Mol. Cell">
        <title>Reconstitution of the transcription factor TFIIH: assignment of functions for the three enzymatic subunits, XPB, XPD, and cdk7.</title>
        <authorList>
            <person name="Tirode F."/>
            <person name="Busso D."/>
            <person name="Coin F."/>
            <person name="Egly J.-M."/>
        </authorList>
    </citation>
    <scope>FUNCTION</scope>
    <scope>SUBUNIT</scope>
</reference>
<reference evidence="8 9 10 11 12" key="9">
    <citation type="journal article" date="2016" name="Nature">
        <title>Near-atomic resolution visualization of human transcription promoter opening.</title>
        <authorList>
            <person name="He Y."/>
            <person name="Yan C."/>
            <person name="Fang J."/>
            <person name="Inouye C."/>
            <person name="Tjian R."/>
            <person name="Ivanov I."/>
            <person name="Nogales E."/>
        </authorList>
    </citation>
    <scope>STRUCTURE BY ELECTRON MICROSCOPY (6.30 ANGSTROMS) OF TRANSCRIPTION PRE-INITIATION COMPLEX</scope>
    <scope>SUBUNIT</scope>
    <scope>SUBCELLULAR LOCATION</scope>
    <scope>FUNCTION</scope>
</reference>
<reference evidence="13" key="10">
    <citation type="journal article" date="2019" name="Nat. Commun.">
        <title>Structural basis of TFIIH activation for nucleotide excision repair.</title>
        <authorList>
            <person name="Kokic G."/>
            <person name="Chernev A."/>
            <person name="Tegunov D."/>
            <person name="Dienemann C."/>
            <person name="Urlaub H."/>
            <person name="Cramer P."/>
        </authorList>
    </citation>
    <scope>STRUCTURE BY ELECTRON MICROSCOPY (3.50 ANGSTROMS) OF NUCLEOTIDE EXCISION REPAIR INTERMEDIATE IN COMPLEX WITH XPA AND DNA SUBSTRATE</scope>
</reference>
<reference evidence="14 15 16 17 18" key="11">
    <citation type="journal article" date="2021" name="Nature">
        <title>Structures of mammalian RNA polymerase II pre-initiation complexes.</title>
        <authorList>
            <person name="Aibara S."/>
            <person name="Schilbach S."/>
            <person name="Cramer P."/>
        </authorList>
    </citation>
    <scope>STRUCTURE BY ELECTRON MICROSCOPY (2.90 ANGSTROMS) OF PRE-INITIATION COMPLEXES WITH PIG POLYMERASE II</scope>
</reference>
<sequence>MVSDEDELNLLVIVVDANPIWWGKQALKESQFTLSKCIDAVMVLGNSHLFMNRSNKLAVIASHIQESRFLYPGKNGRLGDFFGDPGNPPEFNPSGSKDGKYELLTSANEVIVEEIKDLMTKSDIKGQHTETLLAGSLAKALCYIHRMNKEVKDNQEMKSRILVIKAAEDSALQYMNFMNVIFAAQKQNILIDACVLDSDSGLLQQACDITGGLYLKVPQMPSLLQYLLWVFLPDQDQRSQLILPPPVHVDYRAACFCHRNLIEIGYVCSVCLSIFCNFSPICTTCETAFKISLPPVLKAKKKKLKVSA</sequence>
<proteinExistence type="evidence at protein level"/>
<comment type="function">
    <text evidence="2 4">Component of the general transcription and DNA repair factor IIH (TFIIH) core complex, which is involved in general and transcription-coupled nucleotide excision repair (NER) of damaged DNA and, when complexed to CAK, in RNA transcription by RNA polymerase II. In NER, TFIIH acts by opening DNA around the lesion to allow the excision of the damaged oligonucleotide and its replacement by a new DNA fragment. In transcription, TFIIH has an essential role in transcription initiation. When the pre-initiation complex (PIC) has been established, TFIIH is required for promoter opening and promoter escape. Phosphorylation of the C-terminal tail (CTD) of the largest subunit of RNA polymerase II by the kinase module CAK controls the initiation of transcription.</text>
</comment>
<comment type="subunit">
    <text evidence="1 2 3 4">Part of a TFIID-containing RNA polymerase II pre-initiation complex that is composed of TBP and at least GTF2A1, GTF2A2, GTF2E1, GTF2E2, GTF2F1, GTF2H2, GTF2H3, GTF2H4, GTF2H5, GTF2B, TCEA1, ERCC2, ERCC3, TAF1, TAF2, TAF3, TAF4, TAF5, TAF6, TAF7, TAF8, TAF9, TAF10, TAF11, TAF12 and TAF13 (PubMed:27193682). Component of the 7-subunit TFIIH core complex composed of XPB/ERCC3, XPD/ERCC2, GTF2H1, GTF2H2, GTF2H3, GTF2H4 and GTF2H5, which is active in NER. The core complex associates with the 3-subunit CDK-activating kinase (CAK) module composed of CCNH/cyclin H, CDK7 and MNAT1 to form the 10-subunit holoenzyme (holo-TFIIH) active in transcription (PubMed:9852112). Interacts with RARA; the interaction requires prior phosphorylation of RARA on 'Ser-369' which then enhances interaction of RARA with CDK7 (By similarity).</text>
</comment>
<comment type="interaction">
    <interactant intactId="EBI-6380459">
        <id>Q13889</id>
    </interactant>
    <interactant intactId="EBI-8469755">
        <id>Q6P1K8</id>
        <label>GTF2H2C_2</label>
    </interactant>
    <organismsDiffer>false</organismsDiffer>
    <experiments>6</experiments>
</comment>
<comment type="subcellular location">
    <subcellularLocation>
        <location evidence="3 4">Nucleus</location>
    </subcellularLocation>
</comment>
<comment type="alternative products">
    <event type="alternative splicing"/>
    <isoform>
        <id>Q13889-1</id>
        <name>1</name>
        <sequence type="displayed"/>
    </isoform>
    <isoform>
        <id>Q13889-2</id>
        <name>2</name>
        <sequence type="described" ref="VSP_055153"/>
    </isoform>
</comment>
<comment type="similarity">
    <text evidence="7">Belongs to the TFB4 family.</text>
</comment>
<comment type="sequence caution" evidence="7">
    <conflict type="frameshift">
        <sequence resource="EMBL-CDS" id="CAA82909"/>
    </conflict>
</comment>
<dbReference type="EMBL" id="AK298128">
    <property type="protein sequence ID" value="BAG60408.1"/>
    <property type="molecule type" value="mRNA"/>
</dbReference>
<dbReference type="EMBL" id="AK313200">
    <property type="protein sequence ID" value="BAG36016.1"/>
    <property type="molecule type" value="mRNA"/>
</dbReference>
<dbReference type="EMBL" id="AF548661">
    <property type="protein sequence ID" value="AAN40702.1"/>
    <property type="molecule type" value="Genomic_DNA"/>
</dbReference>
<dbReference type="EMBL" id="AC117503">
    <property type="status" value="NOT_ANNOTATED_CDS"/>
    <property type="molecule type" value="Genomic_DNA"/>
</dbReference>
<dbReference type="EMBL" id="CH471054">
    <property type="protein sequence ID" value="EAW98426.1"/>
    <property type="molecule type" value="Genomic_DNA"/>
</dbReference>
<dbReference type="EMBL" id="BC039726">
    <property type="protein sequence ID" value="AAH39726.1"/>
    <property type="molecule type" value="mRNA"/>
</dbReference>
<dbReference type="EMBL" id="BC047868">
    <property type="protein sequence ID" value="AAH47868.2"/>
    <property type="molecule type" value="mRNA"/>
</dbReference>
<dbReference type="EMBL" id="BC065250">
    <property type="protein sequence ID" value="AAH65250.1"/>
    <property type="molecule type" value="mRNA"/>
</dbReference>
<dbReference type="EMBL" id="Z30093">
    <property type="protein sequence ID" value="CAA82909.1"/>
    <property type="status" value="ALT_FRAME"/>
    <property type="molecule type" value="mRNA"/>
</dbReference>
<dbReference type="CCDS" id="CCDS61275.1">
    <molecule id="Q13889-2"/>
</dbReference>
<dbReference type="CCDS" id="CCDS9252.1">
    <molecule id="Q13889-1"/>
</dbReference>
<dbReference type="PIR" id="S44455">
    <property type="entry name" value="S44455"/>
</dbReference>
<dbReference type="RefSeq" id="NP_001258795.1">
    <property type="nucleotide sequence ID" value="NM_001271866.1"/>
</dbReference>
<dbReference type="RefSeq" id="NP_001258796.1">
    <molecule id="Q13889-2"/>
    <property type="nucleotide sequence ID" value="NM_001271867.2"/>
</dbReference>
<dbReference type="RefSeq" id="NP_001258797.1">
    <property type="nucleotide sequence ID" value="NM_001271868.1"/>
</dbReference>
<dbReference type="RefSeq" id="NP_001507.2">
    <molecule id="Q13889-1"/>
    <property type="nucleotide sequence ID" value="NM_001516.4"/>
</dbReference>
<dbReference type="PDB" id="5IVW">
    <property type="method" value="EM"/>
    <property type="resolution" value="10.00 A"/>
    <property type="chains" value="3=1-308"/>
</dbReference>
<dbReference type="PDB" id="5IY6">
    <property type="method" value="EM"/>
    <property type="resolution" value="7.20 A"/>
    <property type="chains" value="3=1-308"/>
</dbReference>
<dbReference type="PDB" id="5IY7">
    <property type="method" value="EM"/>
    <property type="resolution" value="8.60 A"/>
    <property type="chains" value="3=1-308"/>
</dbReference>
<dbReference type="PDB" id="5IY8">
    <property type="method" value="EM"/>
    <property type="resolution" value="7.90 A"/>
    <property type="chains" value="3=1-308"/>
</dbReference>
<dbReference type="PDB" id="5IY9">
    <property type="method" value="EM"/>
    <property type="resolution" value="6.30 A"/>
    <property type="chains" value="3=1-308"/>
</dbReference>
<dbReference type="PDB" id="5O85">
    <property type="method" value="X-ray"/>
    <property type="resolution" value="3.40 A"/>
    <property type="chains" value="A/C=1-308"/>
</dbReference>
<dbReference type="PDB" id="5OF4">
    <property type="method" value="EM"/>
    <property type="resolution" value="4.40 A"/>
    <property type="chains" value="F=1-308"/>
</dbReference>
<dbReference type="PDB" id="6NMI">
    <property type="method" value="EM"/>
    <property type="resolution" value="3.70 A"/>
    <property type="chains" value="F=1-308"/>
</dbReference>
<dbReference type="PDB" id="6O9L">
    <property type="method" value="EM"/>
    <property type="resolution" value="7.20 A"/>
    <property type="chains" value="4=1-308"/>
</dbReference>
<dbReference type="PDB" id="6O9M">
    <property type="method" value="EM"/>
    <property type="resolution" value="4.40 A"/>
    <property type="chains" value="4=1-308"/>
</dbReference>
<dbReference type="PDB" id="6RO4">
    <property type="method" value="EM"/>
    <property type="resolution" value="3.50 A"/>
    <property type="chains" value="E=1-308"/>
</dbReference>
<dbReference type="PDB" id="7AD8">
    <property type="method" value="EM"/>
    <property type="resolution" value="3.50 A"/>
    <property type="chains" value="E=1-308"/>
</dbReference>
<dbReference type="PDB" id="7EGB">
    <property type="method" value="EM"/>
    <property type="resolution" value="3.30 A"/>
    <property type="chains" value="3=1-308"/>
</dbReference>
<dbReference type="PDB" id="7EGC">
    <property type="method" value="EM"/>
    <property type="resolution" value="3.90 A"/>
    <property type="chains" value="3=1-308"/>
</dbReference>
<dbReference type="PDB" id="7ENA">
    <property type="method" value="EM"/>
    <property type="resolution" value="4.07 A"/>
    <property type="chains" value="3=1-308"/>
</dbReference>
<dbReference type="PDB" id="7ENC">
    <property type="method" value="EM"/>
    <property type="resolution" value="4.13 A"/>
    <property type="chains" value="3=1-308"/>
</dbReference>
<dbReference type="PDB" id="7LBM">
    <property type="method" value="EM"/>
    <property type="resolution" value="4.80 A"/>
    <property type="chains" value="b=1-308"/>
</dbReference>
<dbReference type="PDB" id="7NVR">
    <property type="method" value="EM"/>
    <property type="resolution" value="4.50 A"/>
    <property type="chains" value="4=1-308"/>
</dbReference>
<dbReference type="PDB" id="7NVW">
    <property type="method" value="EM"/>
    <property type="resolution" value="4.30 A"/>
    <property type="chains" value="4=1-308"/>
</dbReference>
<dbReference type="PDB" id="7NVX">
    <property type="method" value="EM"/>
    <property type="resolution" value="3.90 A"/>
    <property type="chains" value="4=1-308"/>
</dbReference>
<dbReference type="PDB" id="7NVY">
    <property type="method" value="EM"/>
    <property type="resolution" value="7.30 A"/>
    <property type="chains" value="4=1-308"/>
</dbReference>
<dbReference type="PDB" id="7NVZ">
    <property type="method" value="EM"/>
    <property type="resolution" value="7.20 A"/>
    <property type="chains" value="4=1-308"/>
</dbReference>
<dbReference type="PDB" id="7NW0">
    <property type="method" value="EM"/>
    <property type="resolution" value="6.60 A"/>
    <property type="chains" value="4=1-308"/>
</dbReference>
<dbReference type="PDB" id="8BVW">
    <property type="method" value="EM"/>
    <property type="resolution" value="4.00 A"/>
    <property type="chains" value="5=1-308"/>
</dbReference>
<dbReference type="PDB" id="8BYQ">
    <property type="method" value="EM"/>
    <property type="resolution" value="4.10 A"/>
    <property type="chains" value="5=1-308"/>
</dbReference>
<dbReference type="PDB" id="8EBS">
    <property type="method" value="EM"/>
    <property type="resolution" value="4.00 A"/>
    <property type="chains" value="F=1-308"/>
</dbReference>
<dbReference type="PDB" id="8EBT">
    <property type="method" value="EM"/>
    <property type="resolution" value="3.90 A"/>
    <property type="chains" value="F=6-289"/>
</dbReference>
<dbReference type="PDB" id="8EBU">
    <property type="method" value="EM"/>
    <property type="resolution" value="3.30 A"/>
    <property type="chains" value="F=1-308"/>
</dbReference>
<dbReference type="PDB" id="8EBV">
    <property type="method" value="EM"/>
    <property type="resolution" value="7.10 A"/>
    <property type="chains" value="F=1-308"/>
</dbReference>
<dbReference type="PDB" id="8EBW">
    <property type="method" value="EM"/>
    <property type="resolution" value="5.60 A"/>
    <property type="chains" value="F=1-308"/>
</dbReference>
<dbReference type="PDB" id="8EBX">
    <property type="method" value="EM"/>
    <property type="resolution" value="3.60 A"/>
    <property type="chains" value="F=1-308"/>
</dbReference>
<dbReference type="PDB" id="8EBY">
    <property type="method" value="EM"/>
    <property type="resolution" value="3.60 A"/>
    <property type="chains" value="F=1-308"/>
</dbReference>
<dbReference type="PDB" id="8GXQ">
    <property type="method" value="EM"/>
    <property type="resolution" value="5.04 A"/>
    <property type="chains" value="HE=1-308"/>
</dbReference>
<dbReference type="PDB" id="8GXS">
    <property type="method" value="EM"/>
    <property type="resolution" value="4.16 A"/>
    <property type="chains" value="HE=1-308"/>
</dbReference>
<dbReference type="PDB" id="8WAK">
    <property type="method" value="EM"/>
    <property type="resolution" value="5.47 A"/>
    <property type="chains" value="3=1-308"/>
</dbReference>
<dbReference type="PDB" id="8WAL">
    <property type="method" value="EM"/>
    <property type="resolution" value="8.52 A"/>
    <property type="chains" value="3=1-308"/>
</dbReference>
<dbReference type="PDB" id="8WAN">
    <property type="method" value="EM"/>
    <property type="resolution" value="6.07 A"/>
    <property type="chains" value="3=1-308"/>
</dbReference>
<dbReference type="PDB" id="8WAO">
    <property type="method" value="EM"/>
    <property type="resolution" value="6.40 A"/>
    <property type="chains" value="3=1-308"/>
</dbReference>
<dbReference type="PDB" id="8WAP">
    <property type="method" value="EM"/>
    <property type="resolution" value="5.85 A"/>
    <property type="chains" value="3=1-308"/>
</dbReference>
<dbReference type="PDB" id="8WAQ">
    <property type="method" value="EM"/>
    <property type="resolution" value="6.29 A"/>
    <property type="chains" value="3=1-308"/>
</dbReference>
<dbReference type="PDB" id="8WAR">
    <property type="method" value="EM"/>
    <property type="resolution" value="7.20 A"/>
    <property type="chains" value="3=1-308"/>
</dbReference>
<dbReference type="PDB" id="8WAS">
    <property type="method" value="EM"/>
    <property type="resolution" value="6.13 A"/>
    <property type="chains" value="3=1-308"/>
</dbReference>
<dbReference type="PDBsum" id="5IVW"/>
<dbReference type="PDBsum" id="5IY6"/>
<dbReference type="PDBsum" id="5IY7"/>
<dbReference type="PDBsum" id="5IY8"/>
<dbReference type="PDBsum" id="5IY9"/>
<dbReference type="PDBsum" id="5O85"/>
<dbReference type="PDBsum" id="5OF4"/>
<dbReference type="PDBsum" id="6NMI"/>
<dbReference type="PDBsum" id="6O9L"/>
<dbReference type="PDBsum" id="6O9M"/>
<dbReference type="PDBsum" id="6RO4"/>
<dbReference type="PDBsum" id="7AD8"/>
<dbReference type="PDBsum" id="7EGB"/>
<dbReference type="PDBsum" id="7EGC"/>
<dbReference type="PDBsum" id="7ENA"/>
<dbReference type="PDBsum" id="7ENC"/>
<dbReference type="PDBsum" id="7LBM"/>
<dbReference type="PDBsum" id="7NVR"/>
<dbReference type="PDBsum" id="7NVW"/>
<dbReference type="PDBsum" id="7NVX"/>
<dbReference type="PDBsum" id="7NVY"/>
<dbReference type="PDBsum" id="7NVZ"/>
<dbReference type="PDBsum" id="7NW0"/>
<dbReference type="PDBsum" id="8BVW"/>
<dbReference type="PDBsum" id="8BYQ"/>
<dbReference type="PDBsum" id="8EBS"/>
<dbReference type="PDBsum" id="8EBT"/>
<dbReference type="PDBsum" id="8EBU"/>
<dbReference type="PDBsum" id="8EBV"/>
<dbReference type="PDBsum" id="8EBW"/>
<dbReference type="PDBsum" id="8EBX"/>
<dbReference type="PDBsum" id="8EBY"/>
<dbReference type="PDBsum" id="8GXQ"/>
<dbReference type="PDBsum" id="8GXS"/>
<dbReference type="PDBsum" id="8WAK"/>
<dbReference type="PDBsum" id="8WAL"/>
<dbReference type="PDBsum" id="8WAN"/>
<dbReference type="PDBsum" id="8WAO"/>
<dbReference type="PDBsum" id="8WAP"/>
<dbReference type="PDBsum" id="8WAQ"/>
<dbReference type="PDBsum" id="8WAR"/>
<dbReference type="PDBsum" id="8WAS"/>
<dbReference type="EMDB" id="EMD-0452"/>
<dbReference type="EMDB" id="EMD-12610"/>
<dbReference type="EMDB" id="EMD-12615"/>
<dbReference type="EMDB" id="EMD-12616"/>
<dbReference type="EMDB" id="EMD-12617"/>
<dbReference type="EMDB" id="EMD-12618"/>
<dbReference type="EMDB" id="EMD-12619"/>
<dbReference type="EMDB" id="EMD-16274"/>
<dbReference type="EMDB" id="EMD-16331"/>
<dbReference type="EMDB" id="EMD-23255"/>
<dbReference type="EMDB" id="EMD-27996"/>
<dbReference type="EMDB" id="EMD-27997"/>
<dbReference type="EMDB" id="EMD-27998"/>
<dbReference type="EMDB" id="EMD-27999"/>
<dbReference type="EMDB" id="EMD-28000"/>
<dbReference type="EMDB" id="EMD-28001"/>
<dbReference type="EMDB" id="EMD-28002"/>
<dbReference type="EMDB" id="EMD-29673"/>
<dbReference type="EMDB" id="EMD-29674"/>
<dbReference type="EMDB" id="EMD-31111"/>
<dbReference type="EMDB" id="EMD-31112"/>
<dbReference type="EMDB" id="EMD-31204"/>
<dbReference type="EMDB" id="EMD-31207"/>
<dbReference type="EMDB" id="EMD-34359"/>
<dbReference type="EMDB" id="EMD-34360"/>
<dbReference type="EMDB" id="EMD-37395"/>
<dbReference type="EMDB" id="EMD-37396"/>
<dbReference type="EMDB" id="EMD-37398"/>
<dbReference type="EMDB" id="EMD-37399"/>
<dbReference type="EMDB" id="EMD-37400"/>
<dbReference type="EMDB" id="EMD-37401"/>
<dbReference type="EMDB" id="EMD-37402"/>
<dbReference type="EMDB" id="EMD-37403"/>
<dbReference type="EMDB" id="EMD-3802"/>
<dbReference type="EMDB" id="EMD-4970"/>
<dbReference type="EMDB" id="EMD-8131"/>
<dbReference type="EMDB" id="EMD-8132"/>
<dbReference type="EMDB" id="EMD-8133"/>
<dbReference type="EMDB" id="EMD-8134"/>
<dbReference type="SMR" id="Q13889"/>
<dbReference type="BioGRID" id="109222">
    <property type="interactions" value="54"/>
</dbReference>
<dbReference type="ComplexPortal" id="CPX-2395">
    <property type="entry name" value="General transcription factor TFIIH complex"/>
</dbReference>
<dbReference type="CORUM" id="Q13889"/>
<dbReference type="DIP" id="DIP-787N"/>
<dbReference type="FunCoup" id="Q13889">
    <property type="interactions" value="2485"/>
</dbReference>
<dbReference type="IntAct" id="Q13889">
    <property type="interactions" value="32"/>
</dbReference>
<dbReference type="MINT" id="Q13889"/>
<dbReference type="STRING" id="9606.ENSP00000445162"/>
<dbReference type="iPTMnet" id="Q13889"/>
<dbReference type="PhosphoSitePlus" id="Q13889"/>
<dbReference type="BioMuta" id="GTF2H3"/>
<dbReference type="DMDM" id="50403772"/>
<dbReference type="jPOST" id="Q13889"/>
<dbReference type="MassIVE" id="Q13889"/>
<dbReference type="PaxDb" id="9606-ENSP00000445162"/>
<dbReference type="PeptideAtlas" id="Q13889"/>
<dbReference type="ProteomicsDB" id="59717">
    <molecule id="Q13889-1"/>
</dbReference>
<dbReference type="Pumba" id="Q13889"/>
<dbReference type="Antibodypedia" id="19294">
    <property type="antibodies" value="128 antibodies from 25 providers"/>
</dbReference>
<dbReference type="DNASU" id="2967"/>
<dbReference type="Ensembl" id="ENST00000228955.11">
    <molecule id="Q13889-2"/>
    <property type="protein sequence ID" value="ENSP00000228955.7"/>
    <property type="gene ID" value="ENSG00000111358.14"/>
</dbReference>
<dbReference type="Ensembl" id="ENST00000543341.7">
    <molecule id="Q13889-1"/>
    <property type="protein sequence ID" value="ENSP00000445162.1"/>
    <property type="gene ID" value="ENSG00000111358.14"/>
</dbReference>
<dbReference type="GeneID" id="2967"/>
<dbReference type="KEGG" id="hsa:2967"/>
<dbReference type="MANE-Select" id="ENST00000543341.7">
    <property type="protein sequence ID" value="ENSP00000445162.1"/>
    <property type="RefSeq nucleotide sequence ID" value="NM_001516.5"/>
    <property type="RefSeq protein sequence ID" value="NP_001507.2"/>
</dbReference>
<dbReference type="UCSC" id="uc001ufo.3">
    <molecule id="Q13889-1"/>
    <property type="organism name" value="human"/>
</dbReference>
<dbReference type="AGR" id="HGNC:4657"/>
<dbReference type="CTD" id="2967"/>
<dbReference type="DisGeNET" id="2967"/>
<dbReference type="GeneCards" id="GTF2H3"/>
<dbReference type="HGNC" id="HGNC:4657">
    <property type="gene designation" value="GTF2H3"/>
</dbReference>
<dbReference type="HPA" id="ENSG00000111358">
    <property type="expression patterns" value="Low tissue specificity"/>
</dbReference>
<dbReference type="MIM" id="601750">
    <property type="type" value="gene"/>
</dbReference>
<dbReference type="neXtProt" id="NX_Q13889"/>
<dbReference type="OpenTargets" id="ENSG00000111358"/>
<dbReference type="PharmGKB" id="PA29043"/>
<dbReference type="VEuPathDB" id="HostDB:ENSG00000111358"/>
<dbReference type="eggNOG" id="KOG2487">
    <property type="taxonomic scope" value="Eukaryota"/>
</dbReference>
<dbReference type="GeneTree" id="ENSGT00390000013143"/>
<dbReference type="HOGENOM" id="CLU_040211_1_0_1"/>
<dbReference type="InParanoid" id="Q13889"/>
<dbReference type="OMA" id="QGCDITS"/>
<dbReference type="OrthoDB" id="17307at2759"/>
<dbReference type="PAN-GO" id="Q13889">
    <property type="GO annotations" value="4 GO annotations based on evolutionary models"/>
</dbReference>
<dbReference type="PhylomeDB" id="Q13889"/>
<dbReference type="TreeFam" id="TF314336"/>
<dbReference type="PathwayCommons" id="Q13889"/>
<dbReference type="Reactome" id="R-HSA-112382">
    <property type="pathway name" value="Formation of RNA Pol II elongation complex"/>
</dbReference>
<dbReference type="Reactome" id="R-HSA-113418">
    <property type="pathway name" value="Formation of the Early Elongation Complex"/>
</dbReference>
<dbReference type="Reactome" id="R-HSA-167152">
    <property type="pathway name" value="Formation of HIV elongation complex in the absence of HIV Tat"/>
</dbReference>
<dbReference type="Reactome" id="R-HSA-167158">
    <property type="pathway name" value="Formation of the HIV-1 Early Elongation Complex"/>
</dbReference>
<dbReference type="Reactome" id="R-HSA-167160">
    <property type="pathway name" value="RNA Pol II CTD phosphorylation and interaction with CE during HIV infection"/>
</dbReference>
<dbReference type="Reactome" id="R-HSA-167161">
    <property type="pathway name" value="HIV Transcription Initiation"/>
</dbReference>
<dbReference type="Reactome" id="R-HSA-167162">
    <property type="pathway name" value="RNA Polymerase II HIV Promoter Escape"/>
</dbReference>
<dbReference type="Reactome" id="R-HSA-167172">
    <property type="pathway name" value="Transcription of the HIV genome"/>
</dbReference>
<dbReference type="Reactome" id="R-HSA-167200">
    <property type="pathway name" value="Formation of HIV-1 elongation complex containing HIV-1 Tat"/>
</dbReference>
<dbReference type="Reactome" id="R-HSA-167246">
    <property type="pathway name" value="Tat-mediated elongation of the HIV-1 transcript"/>
</dbReference>
<dbReference type="Reactome" id="R-HSA-427413">
    <property type="pathway name" value="NoRC negatively regulates rRNA expression"/>
</dbReference>
<dbReference type="Reactome" id="R-HSA-5696395">
    <property type="pathway name" value="Formation of Incision Complex in GG-NER"/>
</dbReference>
<dbReference type="Reactome" id="R-HSA-5696400">
    <property type="pathway name" value="Dual Incision in GG-NER"/>
</dbReference>
<dbReference type="Reactome" id="R-HSA-674695">
    <property type="pathway name" value="RNA Polymerase II Pre-transcription Events"/>
</dbReference>
<dbReference type="Reactome" id="R-HSA-6781823">
    <property type="pathway name" value="Formation of TC-NER Pre-Incision Complex"/>
</dbReference>
<dbReference type="Reactome" id="R-HSA-6781827">
    <property type="pathway name" value="Transcription-Coupled Nucleotide Excision Repair (TC-NER)"/>
</dbReference>
<dbReference type="Reactome" id="R-HSA-6782135">
    <property type="pathway name" value="Dual incision in TC-NER"/>
</dbReference>
<dbReference type="Reactome" id="R-HSA-6782210">
    <property type="pathway name" value="Gap-filling DNA repair synthesis and ligation in TC-NER"/>
</dbReference>
<dbReference type="Reactome" id="R-HSA-6796648">
    <property type="pathway name" value="TP53 Regulates Transcription of DNA Repair Genes"/>
</dbReference>
<dbReference type="Reactome" id="R-HSA-72086">
    <property type="pathway name" value="mRNA Capping"/>
</dbReference>
<dbReference type="Reactome" id="R-HSA-73762">
    <property type="pathway name" value="RNA Polymerase I Transcription Initiation"/>
</dbReference>
<dbReference type="Reactome" id="R-HSA-73772">
    <property type="pathway name" value="RNA Polymerase I Promoter Escape"/>
</dbReference>
<dbReference type="Reactome" id="R-HSA-73776">
    <property type="pathway name" value="RNA Polymerase II Promoter Escape"/>
</dbReference>
<dbReference type="Reactome" id="R-HSA-73779">
    <property type="pathway name" value="RNA Polymerase II Transcription Pre-Initiation And Promoter Opening"/>
</dbReference>
<dbReference type="Reactome" id="R-HSA-73863">
    <property type="pathway name" value="RNA Polymerase I Transcription Termination"/>
</dbReference>
<dbReference type="Reactome" id="R-HSA-75953">
    <property type="pathway name" value="RNA Polymerase II Transcription Initiation"/>
</dbReference>
<dbReference type="Reactome" id="R-HSA-75955">
    <property type="pathway name" value="RNA Polymerase II Transcription Elongation"/>
</dbReference>
<dbReference type="Reactome" id="R-HSA-76042">
    <property type="pathway name" value="RNA Polymerase II Transcription Initiation And Promoter Clearance"/>
</dbReference>
<dbReference type="Reactome" id="R-HSA-77075">
    <property type="pathway name" value="RNA Pol II CTD phosphorylation and interaction with CE"/>
</dbReference>
<dbReference type="SignaLink" id="Q13889"/>
<dbReference type="SIGNOR" id="Q13889"/>
<dbReference type="BioGRID-ORCS" id="2967">
    <property type="hits" value="461 hits in 1155 CRISPR screens"/>
</dbReference>
<dbReference type="ChiTaRS" id="GTF2H3">
    <property type="organism name" value="human"/>
</dbReference>
<dbReference type="EvolutionaryTrace" id="Q13889"/>
<dbReference type="GenomeRNAi" id="2967"/>
<dbReference type="Pharos" id="Q13889">
    <property type="development level" value="Tbio"/>
</dbReference>
<dbReference type="PRO" id="PR:Q13889"/>
<dbReference type="Proteomes" id="UP000005640">
    <property type="component" value="Chromosome 12"/>
</dbReference>
<dbReference type="RNAct" id="Q13889">
    <property type="molecule type" value="protein"/>
</dbReference>
<dbReference type="Bgee" id="ENSG00000111358">
    <property type="expression patterns" value="Expressed in endothelial cell and 210 other cell types or tissues"/>
</dbReference>
<dbReference type="ExpressionAtlas" id="Q13889">
    <property type="expression patterns" value="baseline and differential"/>
</dbReference>
<dbReference type="GO" id="GO:0000438">
    <property type="term" value="C:core TFIIH complex portion of holo TFIIH complex"/>
    <property type="evidence" value="ECO:0000314"/>
    <property type="project" value="UniProtKB"/>
</dbReference>
<dbReference type="GO" id="GO:0005654">
    <property type="term" value="C:nucleoplasm"/>
    <property type="evidence" value="ECO:0000314"/>
    <property type="project" value="HPA"/>
</dbReference>
<dbReference type="GO" id="GO:0005634">
    <property type="term" value="C:nucleus"/>
    <property type="evidence" value="ECO:0000314"/>
    <property type="project" value="UniProtKB"/>
</dbReference>
<dbReference type="GO" id="GO:0005669">
    <property type="term" value="C:transcription factor TFIID complex"/>
    <property type="evidence" value="ECO:0000314"/>
    <property type="project" value="UniProtKB"/>
</dbReference>
<dbReference type="GO" id="GO:0000439">
    <property type="term" value="C:transcription factor TFIIH core complex"/>
    <property type="evidence" value="ECO:0000318"/>
    <property type="project" value="GO_Central"/>
</dbReference>
<dbReference type="GO" id="GO:0005675">
    <property type="term" value="C:transcription factor TFIIH holo complex"/>
    <property type="evidence" value="ECO:0000314"/>
    <property type="project" value="UniProtKB"/>
</dbReference>
<dbReference type="GO" id="GO:0097550">
    <property type="term" value="C:transcription preinitiation complex"/>
    <property type="evidence" value="ECO:0000314"/>
    <property type="project" value="UniProtKB"/>
</dbReference>
<dbReference type="GO" id="GO:0016251">
    <property type="term" value="F:RNA polymerase II general transcription initiation factor activity"/>
    <property type="evidence" value="ECO:0000314"/>
    <property type="project" value="ARUK-UCL"/>
</dbReference>
<dbReference type="GO" id="GO:0008270">
    <property type="term" value="F:zinc ion binding"/>
    <property type="evidence" value="ECO:0007669"/>
    <property type="project" value="UniProtKB-KW"/>
</dbReference>
<dbReference type="GO" id="GO:0006281">
    <property type="term" value="P:DNA repair"/>
    <property type="evidence" value="ECO:0000304"/>
    <property type="project" value="ProtInc"/>
</dbReference>
<dbReference type="GO" id="GO:0006289">
    <property type="term" value="P:nucleotide-excision repair"/>
    <property type="evidence" value="ECO:0000318"/>
    <property type="project" value="GO_Central"/>
</dbReference>
<dbReference type="GO" id="GO:0006355">
    <property type="term" value="P:regulation of DNA-templated transcription"/>
    <property type="evidence" value="ECO:0007669"/>
    <property type="project" value="InterPro"/>
</dbReference>
<dbReference type="GO" id="GO:0006366">
    <property type="term" value="P:transcription by RNA polymerase II"/>
    <property type="evidence" value="ECO:0000314"/>
    <property type="project" value="UniProtKB"/>
</dbReference>
<dbReference type="FunFam" id="3.40.50.410:FF:000045">
    <property type="entry name" value="general transcription factor IIH subunit 3 isoform X1"/>
    <property type="match status" value="1"/>
</dbReference>
<dbReference type="Gene3D" id="3.40.50.410">
    <property type="entry name" value="von Willebrand factor, type A domain"/>
    <property type="match status" value="1"/>
</dbReference>
<dbReference type="InterPro" id="IPR004600">
    <property type="entry name" value="TFIIH_Tfb4/GTF2H3"/>
</dbReference>
<dbReference type="InterPro" id="IPR036465">
    <property type="entry name" value="vWFA_dom_sf"/>
</dbReference>
<dbReference type="NCBIfam" id="TIGR00627">
    <property type="entry name" value="tfb4"/>
    <property type="match status" value="1"/>
</dbReference>
<dbReference type="PANTHER" id="PTHR12831:SF0">
    <property type="entry name" value="GENERAL TRANSCRIPTION FACTOR IIH SUBUNIT 3"/>
    <property type="match status" value="1"/>
</dbReference>
<dbReference type="PANTHER" id="PTHR12831">
    <property type="entry name" value="TRANSCRIPTION INITIATION FACTOR IIH TFIIH , POLYPEPTIDE 3-RELATED"/>
    <property type="match status" value="1"/>
</dbReference>
<dbReference type="Pfam" id="PF03850">
    <property type="entry name" value="Tfb4"/>
    <property type="match status" value="1"/>
</dbReference>
<gene>
    <name type="primary">GTF2H3</name>
</gene>
<accession>Q13889</accession>
<accession>B2R819</accession>
<accession>B4DNZ6</accession>
<accession>Q7L0G0</accession>
<accession>Q96AT7</accession>
<protein>
    <recommendedName>
        <fullName>General transcription factor IIH subunit 3</fullName>
    </recommendedName>
    <alternativeName>
        <fullName>Basic transcription factor 2 34 kDa subunit</fullName>
        <shortName evidence="6">BTF2 p34</shortName>
    </alternativeName>
    <alternativeName>
        <fullName>General transcription factor IIH polypeptide 3</fullName>
    </alternativeName>
    <alternativeName>
        <fullName evidence="6">TFIIH basal transcription factor complex p34 subunit</fullName>
    </alternativeName>
</protein>
<organism>
    <name type="scientific">Homo sapiens</name>
    <name type="common">Human</name>
    <dbReference type="NCBI Taxonomy" id="9606"/>
    <lineage>
        <taxon>Eukaryota</taxon>
        <taxon>Metazoa</taxon>
        <taxon>Chordata</taxon>
        <taxon>Craniata</taxon>
        <taxon>Vertebrata</taxon>
        <taxon>Euteleostomi</taxon>
        <taxon>Mammalia</taxon>
        <taxon>Eutheria</taxon>
        <taxon>Euarchontoglires</taxon>
        <taxon>Primates</taxon>
        <taxon>Haplorrhini</taxon>
        <taxon>Catarrhini</taxon>
        <taxon>Hominidae</taxon>
        <taxon>Homo</taxon>
    </lineage>
</organism>
<feature type="chain" id="PRO_0000119251" description="General transcription factor IIH subunit 3">
    <location>
        <begin position="1"/>
        <end position="308"/>
    </location>
</feature>
<feature type="zinc finger region" description="C4-type">
    <location>
        <begin position="268"/>
        <end position="285"/>
    </location>
</feature>
<feature type="splice variant" id="VSP_055153" description="In isoform 2." evidence="5">
    <location>
        <begin position="1"/>
        <end position="41"/>
    </location>
</feature>
<feature type="strand" evidence="20">
    <location>
        <begin position="7"/>
        <end position="16"/>
    </location>
</feature>
<feature type="helix" evidence="20">
    <location>
        <begin position="19"/>
        <end position="28"/>
    </location>
</feature>
<feature type="helix" evidence="20">
    <location>
        <begin position="34"/>
        <end position="51"/>
    </location>
</feature>
<feature type="strand" evidence="20">
    <location>
        <begin position="56"/>
        <end position="62"/>
    </location>
</feature>
<feature type="strand" evidence="20">
    <location>
        <begin position="67"/>
        <end position="69"/>
    </location>
</feature>
<feature type="helix" evidence="20">
    <location>
        <begin position="102"/>
        <end position="120"/>
    </location>
</feature>
<feature type="helix" evidence="20">
    <location>
        <begin position="133"/>
        <end position="150"/>
    </location>
</feature>
<feature type="strand" evidence="20">
    <location>
        <begin position="155"/>
        <end position="165"/>
    </location>
</feature>
<feature type="helix" evidence="19">
    <location>
        <begin position="171"/>
        <end position="173"/>
    </location>
</feature>
<feature type="helix" evidence="20">
    <location>
        <begin position="174"/>
        <end position="186"/>
    </location>
</feature>
<feature type="strand" evidence="20">
    <location>
        <begin position="190"/>
        <end position="198"/>
    </location>
</feature>
<feature type="helix" evidence="20">
    <location>
        <begin position="201"/>
        <end position="210"/>
    </location>
</feature>
<feature type="strand" evidence="20">
    <location>
        <begin position="214"/>
        <end position="216"/>
    </location>
</feature>
<feature type="helix" evidence="20">
    <location>
        <begin position="220"/>
        <end position="222"/>
    </location>
</feature>
<feature type="helix" evidence="20">
    <location>
        <begin position="223"/>
        <end position="229"/>
    </location>
</feature>
<feature type="helix" evidence="20">
    <location>
        <begin position="235"/>
        <end position="240"/>
    </location>
</feature>
<feature type="turn" evidence="20">
    <location>
        <begin position="256"/>
        <end position="258"/>
    </location>
</feature>
<feature type="strand" evidence="20">
    <location>
        <begin position="260"/>
        <end position="267"/>
    </location>
</feature>
<feature type="strand" evidence="20">
    <location>
        <begin position="269"/>
        <end position="271"/>
    </location>
</feature>
<feature type="strand" evidence="20">
    <location>
        <begin position="274"/>
        <end position="277"/>
    </location>
</feature>
<feature type="helix" evidence="20">
    <location>
        <begin position="284"/>
        <end position="286"/>
    </location>
</feature>
<evidence type="ECO:0000250" key="1">
    <source>
        <dbReference type="UniProtKB" id="Q8VD76"/>
    </source>
</evidence>
<evidence type="ECO:0000269" key="2">
    <source>
    </source>
</evidence>
<evidence type="ECO:0000269" key="3">
    <source>
    </source>
</evidence>
<evidence type="ECO:0000269" key="4">
    <source>
    </source>
</evidence>
<evidence type="ECO:0000303" key="5">
    <source>
    </source>
</evidence>
<evidence type="ECO:0000303" key="6">
    <source>
    </source>
</evidence>
<evidence type="ECO:0000305" key="7"/>
<evidence type="ECO:0007744" key="8">
    <source>
        <dbReference type="PDB" id="5IVW"/>
    </source>
</evidence>
<evidence type="ECO:0007744" key="9">
    <source>
        <dbReference type="PDB" id="5IY6"/>
    </source>
</evidence>
<evidence type="ECO:0007744" key="10">
    <source>
        <dbReference type="PDB" id="5IY7"/>
    </source>
</evidence>
<evidence type="ECO:0007744" key="11">
    <source>
        <dbReference type="PDB" id="5IY8"/>
    </source>
</evidence>
<evidence type="ECO:0007744" key="12">
    <source>
        <dbReference type="PDB" id="5IY9"/>
    </source>
</evidence>
<evidence type="ECO:0007744" key="13">
    <source>
        <dbReference type="PDB" id="6RO4"/>
    </source>
</evidence>
<evidence type="ECO:0007744" key="14">
    <source>
        <dbReference type="PDB" id="7NVW"/>
    </source>
</evidence>
<evidence type="ECO:0007744" key="15">
    <source>
        <dbReference type="PDB" id="7NVX"/>
    </source>
</evidence>
<evidence type="ECO:0007744" key="16">
    <source>
        <dbReference type="PDB" id="7NVY"/>
    </source>
</evidence>
<evidence type="ECO:0007744" key="17">
    <source>
        <dbReference type="PDB" id="7NVZ"/>
    </source>
</evidence>
<evidence type="ECO:0007744" key="18">
    <source>
        <dbReference type="PDB" id="7NW0"/>
    </source>
</evidence>
<evidence type="ECO:0007829" key="19">
    <source>
        <dbReference type="PDB" id="6RO4"/>
    </source>
</evidence>
<evidence type="ECO:0007829" key="20">
    <source>
        <dbReference type="PDB" id="8EBU"/>
    </source>
</evidence>
<keyword id="KW-0002">3D-structure</keyword>
<keyword id="KW-0025">Alternative splicing</keyword>
<keyword id="KW-0903">Direct protein sequencing</keyword>
<keyword id="KW-0227">DNA damage</keyword>
<keyword id="KW-0234">DNA repair</keyword>
<keyword id="KW-0479">Metal-binding</keyword>
<keyword id="KW-0539">Nucleus</keyword>
<keyword id="KW-1267">Proteomics identification</keyword>
<keyword id="KW-1185">Reference proteome</keyword>
<keyword id="KW-0804">Transcription</keyword>
<keyword id="KW-0805">Transcription regulation</keyword>
<keyword id="KW-0862">Zinc</keyword>
<keyword id="KW-0863">Zinc-finger</keyword>